<proteinExistence type="evidence at protein level"/>
<organism evidence="9">
    <name type="scientific">Thermotoga maritima (strain ATCC 43589 / DSM 3109 / JCM 10099 / NBRC 100826 / MSB8)</name>
    <dbReference type="NCBI Taxonomy" id="243274"/>
    <lineage>
        <taxon>Bacteria</taxon>
        <taxon>Thermotogati</taxon>
        <taxon>Thermotogota</taxon>
        <taxon>Thermotogae</taxon>
        <taxon>Thermotogales</taxon>
        <taxon>Thermotogaceae</taxon>
        <taxon>Thermotoga</taxon>
    </lineage>
</organism>
<feature type="chain" id="PRO_0000433230" description="[FeFe] hydrogenase maturase subunit HydE">
    <location>
        <begin position="1"/>
        <end position="348"/>
    </location>
</feature>
<feature type="domain" description="Radical SAM core" evidence="3">
    <location>
        <begin position="49"/>
        <end position="268"/>
    </location>
</feature>
<feature type="binding site" evidence="2 4 5 6 12 13 14">
    <location>
        <position position="63"/>
    </location>
    <ligand>
        <name>[4Fe-4S] cluster</name>
        <dbReference type="ChEBI" id="CHEBI:49883"/>
        <note>4Fe-4S-S-AdoMet</note>
    </ligand>
</feature>
<feature type="binding site" evidence="2 4 12 13 14">
    <location>
        <position position="67"/>
    </location>
    <ligand>
        <name>[4Fe-4S] cluster</name>
        <dbReference type="ChEBI" id="CHEBI:49883"/>
        <note>4Fe-4S-S-AdoMet</note>
    </ligand>
</feature>
<feature type="binding site" evidence="2 4 12 13 14">
    <location>
        <position position="70"/>
    </location>
    <ligand>
        <name>[4Fe-4S] cluster</name>
        <dbReference type="ChEBI" id="CHEBI:49883"/>
        <note>4Fe-4S-S-AdoMet</note>
    </ligand>
</feature>
<feature type="binding site" evidence="13 15 16 17 18 19">
    <location>
        <position position="311"/>
    </location>
    <ligand>
        <name>[2Fe-2S] cluster</name>
        <dbReference type="ChEBI" id="CHEBI:190135"/>
    </ligand>
</feature>
<feature type="binding site" evidence="13 17 18 19">
    <location>
        <position position="319"/>
    </location>
    <ligand>
        <name>[2Fe-2S] cluster</name>
        <dbReference type="ChEBI" id="CHEBI:190135"/>
    </ligand>
</feature>
<feature type="binding site" evidence="13 17 18 19">
    <location>
        <position position="322"/>
    </location>
    <ligand>
        <name>[2Fe-2S] cluster</name>
        <dbReference type="ChEBI" id="CHEBI:190135"/>
    </ligand>
</feature>
<feature type="mutagenesis site" description="Eliminates binding of one iron-sulfur cluster; when associated with A-67 and A-70." evidence="4">
    <original>C</original>
    <variation>A</variation>
    <location>
        <position position="63"/>
    </location>
</feature>
<feature type="mutagenesis site" description="Eliminates binding of one iron-sulfur cluster; when associated with A-63 and A-70." evidence="4">
    <original>C</original>
    <variation>A</variation>
    <location>
        <position position="67"/>
    </location>
</feature>
<feature type="mutagenesis site" description="Eliminates binding of one iron-sulfur cluster; when associated with A-63 and A-67." evidence="4">
    <original>C</original>
    <variation>A</variation>
    <location>
        <position position="70"/>
    </location>
</feature>
<feature type="helix" evidence="20">
    <location>
        <begin position="3"/>
        <end position="11"/>
    </location>
</feature>
<feature type="helix" evidence="20">
    <location>
        <begin position="17"/>
        <end position="25"/>
    </location>
</feature>
<feature type="helix" evidence="20">
    <location>
        <begin position="29"/>
        <end position="47"/>
    </location>
</feature>
<feature type="strand" evidence="20">
    <location>
        <begin position="49"/>
        <end position="60"/>
    </location>
</feature>
<feature type="helix" evidence="20">
    <location>
        <begin position="86"/>
        <end position="98"/>
    </location>
</feature>
<feature type="strand" evidence="20">
    <location>
        <begin position="102"/>
        <end position="109"/>
    </location>
</feature>
<feature type="helix" evidence="20">
    <location>
        <begin position="112"/>
        <end position="114"/>
    </location>
</feature>
<feature type="helix" evidence="20">
    <location>
        <begin position="117"/>
        <end position="127"/>
    </location>
</feature>
<feature type="turn" evidence="23">
    <location>
        <begin position="128"/>
        <end position="130"/>
    </location>
</feature>
<feature type="strand" evidence="20">
    <location>
        <begin position="132"/>
        <end position="136"/>
    </location>
</feature>
<feature type="helix" evidence="20">
    <location>
        <begin position="142"/>
        <end position="151"/>
    </location>
</feature>
<feature type="strand" evidence="20">
    <location>
        <begin position="155"/>
        <end position="157"/>
    </location>
</feature>
<feature type="helix" evidence="20">
    <location>
        <begin position="165"/>
        <end position="171"/>
    </location>
</feature>
<feature type="helix" evidence="20">
    <location>
        <begin position="177"/>
        <end position="189"/>
    </location>
</feature>
<feature type="strand" evidence="20">
    <location>
        <begin position="193"/>
        <end position="196"/>
    </location>
</feature>
<feature type="strand" evidence="20">
    <location>
        <begin position="198"/>
        <end position="201"/>
    </location>
</feature>
<feature type="helix" evidence="20">
    <location>
        <begin position="207"/>
        <end position="220"/>
    </location>
</feature>
<feature type="strand" evidence="20">
    <location>
        <begin position="223"/>
        <end position="225"/>
    </location>
</feature>
<feature type="turn" evidence="20">
    <location>
        <begin position="237"/>
        <end position="240"/>
    </location>
</feature>
<feature type="helix" evidence="20">
    <location>
        <begin position="246"/>
        <end position="259"/>
    </location>
</feature>
<feature type="helix" evidence="20">
    <location>
        <begin position="269"/>
        <end position="274"/>
    </location>
</feature>
<feature type="helix" evidence="20">
    <location>
        <begin position="278"/>
        <end position="283"/>
    </location>
</feature>
<feature type="turn" evidence="20">
    <location>
        <begin position="284"/>
        <end position="286"/>
    </location>
</feature>
<feature type="turn" evidence="20">
    <location>
        <begin position="297"/>
        <end position="299"/>
    </location>
</feature>
<feature type="helix" evidence="20">
    <location>
        <begin position="300"/>
        <end position="302"/>
    </location>
</feature>
<feature type="strand" evidence="21">
    <location>
        <begin position="305"/>
        <end position="308"/>
    </location>
</feature>
<feature type="strand" evidence="20">
    <location>
        <begin position="312"/>
        <end position="314"/>
    </location>
</feature>
<feature type="strand" evidence="22">
    <location>
        <begin position="316"/>
        <end position="318"/>
    </location>
</feature>
<feature type="helix" evidence="20">
    <location>
        <begin position="319"/>
        <end position="329"/>
    </location>
</feature>
<gene>
    <name evidence="9" type="ordered locus">TM_1269</name>
    <name evidence="11" type="ORF">THEMA_07990</name>
    <name evidence="10" type="ORF">Tmari_1274</name>
</gene>
<dbReference type="EC" id="1.8.-.-" evidence="8"/>
<dbReference type="EMBL" id="AE000512">
    <property type="protein sequence ID" value="AAD36344.1"/>
    <property type="molecule type" value="Genomic_DNA"/>
</dbReference>
<dbReference type="EMBL" id="CP004077">
    <property type="protein sequence ID" value="AGL50198.1"/>
    <property type="molecule type" value="Genomic_DNA"/>
</dbReference>
<dbReference type="EMBL" id="CP007013">
    <property type="protein sequence ID" value="AHD18826.1"/>
    <property type="molecule type" value="Genomic_DNA"/>
</dbReference>
<dbReference type="PIR" id="D72274">
    <property type="entry name" value="D72274"/>
</dbReference>
<dbReference type="RefSeq" id="NP_229074.1">
    <property type="nucleotide sequence ID" value="NC_000853.1"/>
</dbReference>
<dbReference type="PDB" id="3CIW">
    <property type="method" value="X-ray"/>
    <property type="resolution" value="1.35 A"/>
    <property type="chains" value="A=1-348"/>
</dbReference>
<dbReference type="PDB" id="3CIX">
    <property type="method" value="X-ray"/>
    <property type="resolution" value="1.70 A"/>
    <property type="chains" value="A=1-348"/>
</dbReference>
<dbReference type="PDB" id="3IIX">
    <property type="method" value="X-ray"/>
    <property type="resolution" value="1.25 A"/>
    <property type="chains" value="A=1-348"/>
</dbReference>
<dbReference type="PDB" id="3IIZ">
    <property type="method" value="X-ray"/>
    <property type="resolution" value="1.62 A"/>
    <property type="chains" value="A=1-348"/>
</dbReference>
<dbReference type="PDB" id="4JXC">
    <property type="method" value="X-ray"/>
    <property type="resolution" value="1.50 A"/>
    <property type="chains" value="A=1-348"/>
</dbReference>
<dbReference type="PDB" id="4JY8">
    <property type="method" value="X-ray"/>
    <property type="resolution" value="2.90 A"/>
    <property type="chains" value="A=2-348"/>
</dbReference>
<dbReference type="PDB" id="4JY9">
    <property type="method" value="X-ray"/>
    <property type="resolution" value="1.60 A"/>
    <property type="chains" value="A=1-348"/>
</dbReference>
<dbReference type="PDB" id="4JYD">
    <property type="method" value="X-ray"/>
    <property type="resolution" value="1.71 A"/>
    <property type="chains" value="A=1-348"/>
</dbReference>
<dbReference type="PDB" id="4JYE">
    <property type="method" value="X-ray"/>
    <property type="resolution" value="1.65 A"/>
    <property type="chains" value="A=1-348"/>
</dbReference>
<dbReference type="PDB" id="4JYF">
    <property type="method" value="X-ray"/>
    <property type="resolution" value="1.45 A"/>
    <property type="chains" value="A=1-348"/>
</dbReference>
<dbReference type="PDB" id="5FEP">
    <property type="method" value="X-ray"/>
    <property type="resolution" value="1.45 A"/>
    <property type="chains" value="A=2-348"/>
</dbReference>
<dbReference type="PDB" id="5FES">
    <property type="method" value="X-ray"/>
    <property type="resolution" value="1.27 A"/>
    <property type="chains" value="A=2-348"/>
</dbReference>
<dbReference type="PDB" id="5FEW">
    <property type="method" value="X-ray"/>
    <property type="resolution" value="1.17 A"/>
    <property type="chains" value="A=2-348"/>
</dbReference>
<dbReference type="PDB" id="5FEX">
    <property type="method" value="X-ray"/>
    <property type="resolution" value="1.32 A"/>
    <property type="chains" value="A=2-348"/>
</dbReference>
<dbReference type="PDB" id="5FEZ">
    <property type="method" value="X-ray"/>
    <property type="resolution" value="1.35 A"/>
    <property type="chains" value="A=2-348"/>
</dbReference>
<dbReference type="PDB" id="5FF0">
    <property type="method" value="X-ray"/>
    <property type="resolution" value="1.49 A"/>
    <property type="chains" value="A=2-348"/>
</dbReference>
<dbReference type="PDB" id="5FF2">
    <property type="method" value="X-ray"/>
    <property type="resolution" value="1.47 A"/>
    <property type="chains" value="A=1-348"/>
</dbReference>
<dbReference type="PDB" id="5FF3">
    <property type="method" value="X-ray"/>
    <property type="resolution" value="1.18 A"/>
    <property type="chains" value="A=1-348"/>
</dbReference>
<dbReference type="PDB" id="5FF4">
    <property type="method" value="X-ray"/>
    <property type="resolution" value="1.35 A"/>
    <property type="chains" value="A=2-348"/>
</dbReference>
<dbReference type="PDB" id="7O1O">
    <property type="method" value="X-ray"/>
    <property type="resolution" value="1.25 A"/>
    <property type="chains" value="A=2-345"/>
</dbReference>
<dbReference type="PDB" id="7O1P">
    <property type="method" value="X-ray"/>
    <property type="resolution" value="2.58 A"/>
    <property type="chains" value="A=2-348"/>
</dbReference>
<dbReference type="PDB" id="7O1S">
    <property type="method" value="X-ray"/>
    <property type="resolution" value="1.39 A"/>
    <property type="chains" value="A=1-348"/>
</dbReference>
<dbReference type="PDB" id="7O1T">
    <property type="method" value="X-ray"/>
    <property type="resolution" value="1.50 A"/>
    <property type="chains" value="A=2-348"/>
</dbReference>
<dbReference type="PDB" id="7O25">
    <property type="method" value="X-ray"/>
    <property type="resolution" value="1.34 A"/>
    <property type="chains" value="A=2-348"/>
</dbReference>
<dbReference type="PDB" id="7O26">
    <property type="method" value="X-ray"/>
    <property type="resolution" value="1.50 A"/>
    <property type="chains" value="A=1-348"/>
</dbReference>
<dbReference type="PDB" id="8QMK">
    <property type="method" value="X-ray"/>
    <property type="resolution" value="1.30 A"/>
    <property type="chains" value="A=2-348"/>
</dbReference>
<dbReference type="PDB" id="8QML">
    <property type="method" value="X-ray"/>
    <property type="resolution" value="1.40 A"/>
    <property type="chains" value="A=2-348"/>
</dbReference>
<dbReference type="PDB" id="8QMM">
    <property type="method" value="X-ray"/>
    <property type="resolution" value="1.20 A"/>
    <property type="chains" value="A=2-348"/>
</dbReference>
<dbReference type="PDB" id="8QMN">
    <property type="method" value="X-ray"/>
    <property type="resolution" value="1.48 A"/>
    <property type="chains" value="A=2-348"/>
</dbReference>
<dbReference type="PDBsum" id="3CIW"/>
<dbReference type="PDBsum" id="3CIX"/>
<dbReference type="PDBsum" id="3IIX"/>
<dbReference type="PDBsum" id="3IIZ"/>
<dbReference type="PDBsum" id="4JXC"/>
<dbReference type="PDBsum" id="4JY8"/>
<dbReference type="PDBsum" id="4JY9"/>
<dbReference type="PDBsum" id="4JYD"/>
<dbReference type="PDBsum" id="4JYE"/>
<dbReference type="PDBsum" id="4JYF"/>
<dbReference type="PDBsum" id="5FEP"/>
<dbReference type="PDBsum" id="5FES"/>
<dbReference type="PDBsum" id="5FEW"/>
<dbReference type="PDBsum" id="5FEX"/>
<dbReference type="PDBsum" id="5FEZ"/>
<dbReference type="PDBsum" id="5FF0"/>
<dbReference type="PDBsum" id="5FF2"/>
<dbReference type="PDBsum" id="5FF3"/>
<dbReference type="PDBsum" id="5FF4"/>
<dbReference type="PDBsum" id="7O1O"/>
<dbReference type="PDBsum" id="7O1P"/>
<dbReference type="PDBsum" id="7O1S"/>
<dbReference type="PDBsum" id="7O1T"/>
<dbReference type="PDBsum" id="7O25"/>
<dbReference type="PDBsum" id="7O26"/>
<dbReference type="PDBsum" id="8QMK"/>
<dbReference type="PDBsum" id="8QML"/>
<dbReference type="PDBsum" id="8QMM"/>
<dbReference type="PDBsum" id="8QMN"/>
<dbReference type="SMR" id="Q9X0Z6"/>
<dbReference type="FunCoup" id="Q9X0Z6">
    <property type="interactions" value="292"/>
</dbReference>
<dbReference type="STRING" id="243274.TM_1269"/>
<dbReference type="PaxDb" id="243274-THEMA_07990"/>
<dbReference type="EnsemblBacteria" id="AAD36344">
    <property type="protein sequence ID" value="AAD36344"/>
    <property type="gene ID" value="TM_1269"/>
</dbReference>
<dbReference type="KEGG" id="tma:TM1269"/>
<dbReference type="KEGG" id="tmi:THEMA_07990"/>
<dbReference type="KEGG" id="tmm:Tmari_1274"/>
<dbReference type="KEGG" id="tmw:THMA_1294"/>
<dbReference type="PATRIC" id="fig|243274.17.peg.1272"/>
<dbReference type="eggNOG" id="COG0502">
    <property type="taxonomic scope" value="Bacteria"/>
</dbReference>
<dbReference type="InParanoid" id="Q9X0Z6"/>
<dbReference type="OrthoDB" id="9775764at2"/>
<dbReference type="EvolutionaryTrace" id="Q9X0Z6"/>
<dbReference type="Proteomes" id="UP000008183">
    <property type="component" value="Chromosome"/>
</dbReference>
<dbReference type="GO" id="GO:0051537">
    <property type="term" value="F:2 iron, 2 sulfur cluster binding"/>
    <property type="evidence" value="ECO:0007669"/>
    <property type="project" value="UniProtKB-KW"/>
</dbReference>
<dbReference type="GO" id="GO:0051539">
    <property type="term" value="F:4 iron, 4 sulfur cluster binding"/>
    <property type="evidence" value="ECO:0007669"/>
    <property type="project" value="UniProtKB-KW"/>
</dbReference>
<dbReference type="GO" id="GO:0046872">
    <property type="term" value="F:metal ion binding"/>
    <property type="evidence" value="ECO:0007669"/>
    <property type="project" value="UniProtKB-KW"/>
</dbReference>
<dbReference type="GO" id="GO:0016491">
    <property type="term" value="F:oxidoreductase activity"/>
    <property type="evidence" value="ECO:0007669"/>
    <property type="project" value="UniProtKB-KW"/>
</dbReference>
<dbReference type="GO" id="GO:0016740">
    <property type="term" value="F:transferase activity"/>
    <property type="evidence" value="ECO:0000318"/>
    <property type="project" value="GO_Central"/>
</dbReference>
<dbReference type="GO" id="GO:0044272">
    <property type="term" value="P:sulfur compound biosynthetic process"/>
    <property type="evidence" value="ECO:0007669"/>
    <property type="project" value="UniProtKB-ARBA"/>
</dbReference>
<dbReference type="GO" id="GO:0042364">
    <property type="term" value="P:water-soluble vitamin biosynthetic process"/>
    <property type="evidence" value="ECO:0007669"/>
    <property type="project" value="UniProtKB-ARBA"/>
</dbReference>
<dbReference type="CDD" id="cd01335">
    <property type="entry name" value="Radical_SAM"/>
    <property type="match status" value="1"/>
</dbReference>
<dbReference type="Gene3D" id="3.20.20.70">
    <property type="entry name" value="Aldolase class I"/>
    <property type="match status" value="1"/>
</dbReference>
<dbReference type="InterPro" id="IPR013785">
    <property type="entry name" value="Aldolase_TIM"/>
</dbReference>
<dbReference type="InterPro" id="IPR010722">
    <property type="entry name" value="BATS_dom"/>
</dbReference>
<dbReference type="InterPro" id="IPR006638">
    <property type="entry name" value="Elp3/MiaA/NifB-like_rSAM"/>
</dbReference>
<dbReference type="InterPro" id="IPR024021">
    <property type="entry name" value="FeFe-hyd_HydE_rSAM"/>
</dbReference>
<dbReference type="InterPro" id="IPR034422">
    <property type="entry name" value="HydE/PylB-like"/>
</dbReference>
<dbReference type="InterPro" id="IPR007197">
    <property type="entry name" value="rSAM"/>
</dbReference>
<dbReference type="NCBIfam" id="TIGR03956">
    <property type="entry name" value="rSAM_HydE"/>
    <property type="match status" value="1"/>
</dbReference>
<dbReference type="PANTHER" id="PTHR43726">
    <property type="entry name" value="3-METHYLORNITHINE SYNTHASE"/>
    <property type="match status" value="1"/>
</dbReference>
<dbReference type="PANTHER" id="PTHR43726:SF1">
    <property type="entry name" value="BIOTIN SYNTHASE"/>
    <property type="match status" value="1"/>
</dbReference>
<dbReference type="Pfam" id="PF04055">
    <property type="entry name" value="Radical_SAM"/>
    <property type="match status" value="1"/>
</dbReference>
<dbReference type="PIRSF" id="PIRSF004762">
    <property type="entry name" value="CHP00423"/>
    <property type="match status" value="1"/>
</dbReference>
<dbReference type="SFLD" id="SFLDG01082">
    <property type="entry name" value="B12-binding_domain_containing"/>
    <property type="match status" value="1"/>
</dbReference>
<dbReference type="SFLD" id="SFLDG01060">
    <property type="entry name" value="BATS_domain_containing"/>
    <property type="match status" value="1"/>
</dbReference>
<dbReference type="SFLD" id="SFLDF00348">
    <property type="entry name" value="FeFe_hydrogenase_maturase_(Hyd"/>
    <property type="match status" value="1"/>
</dbReference>
<dbReference type="SMART" id="SM00876">
    <property type="entry name" value="BATS"/>
    <property type="match status" value="1"/>
</dbReference>
<dbReference type="SMART" id="SM00729">
    <property type="entry name" value="Elp3"/>
    <property type="match status" value="1"/>
</dbReference>
<dbReference type="SUPFAM" id="SSF102114">
    <property type="entry name" value="Radical SAM enzymes"/>
    <property type="match status" value="1"/>
</dbReference>
<dbReference type="PROSITE" id="PS51918">
    <property type="entry name" value="RADICAL_SAM"/>
    <property type="match status" value="1"/>
</dbReference>
<name>HYDE_THEMA</name>
<comment type="function">
    <text evidence="1 4 8">Required for the maturation of the [FeFe]-hydrogenase HydA (By similarity). Catalyzes the reductive cleavage of S-adenosyl-L-methionine (in vitro), suggesting it may contribute to the biosynthesis of an essential sulfur-containing ligand that binds to the hydrogenase active site [2Fe-2S] cluster (PubMed:16137685).</text>
</comment>
<comment type="cofactor">
    <cofactor evidence="2 4 5 6 7">
        <name>[4Fe-4S] cluster</name>
        <dbReference type="ChEBI" id="CHEBI:49883"/>
    </cofactor>
    <text evidence="2 5 6 7">Binds 1 [4Fe-4S] cluster. The cluster is coordinated with 3 cysteines and an exchangeable S-adenosyl-L-methionine.</text>
</comment>
<comment type="cofactor">
    <cofactor evidence="5 6 7">
        <name>[2Fe-2S] cluster</name>
        <dbReference type="ChEBI" id="CHEBI:190135"/>
    </cofactor>
    <text evidence="5 6 7">Binds 1 [2Fe-2S] cluster.</text>
</comment>
<comment type="subunit">
    <text evidence="4 5">Monomer.</text>
</comment>
<comment type="similarity">
    <text evidence="8">Belongs to the radical SAM superfamily. HydE family.</text>
</comment>
<reference key="1">
    <citation type="journal article" date="1999" name="Nature">
        <title>Evidence for lateral gene transfer between Archaea and Bacteria from genome sequence of Thermotoga maritima.</title>
        <authorList>
            <person name="Nelson K.E."/>
            <person name="Clayton R.A."/>
            <person name="Gill S.R."/>
            <person name="Gwinn M.L."/>
            <person name="Dodson R.J."/>
            <person name="Haft D.H."/>
            <person name="Hickey E.K."/>
            <person name="Peterson J.D."/>
            <person name="Nelson W.C."/>
            <person name="Ketchum K.A."/>
            <person name="McDonald L.A."/>
            <person name="Utterback T.R."/>
            <person name="Malek J.A."/>
            <person name="Linher K.D."/>
            <person name="Garrett M.M."/>
            <person name="Stewart A.M."/>
            <person name="Cotton M.D."/>
            <person name="Pratt M.S."/>
            <person name="Phillips C.A."/>
            <person name="Richardson D.L."/>
            <person name="Heidelberg J.F."/>
            <person name="Sutton G.G."/>
            <person name="Fleischmann R.D."/>
            <person name="Eisen J.A."/>
            <person name="White O."/>
            <person name="Salzberg S.L."/>
            <person name="Smith H.O."/>
            <person name="Venter J.C."/>
            <person name="Fraser C.M."/>
        </authorList>
    </citation>
    <scope>NUCLEOTIDE SEQUENCE [LARGE SCALE GENOMIC DNA]</scope>
    <source>
        <strain>ATCC 43589 / DSM 3109 / JCM 10099 / NBRC 100826 / MSB8</strain>
    </source>
</reference>
<reference evidence="10" key="2">
    <citation type="journal article" date="2013" name="PLoS Genet.">
        <title>The genome organization of Thermotoga maritima reflects its lifestyle.</title>
        <authorList>
            <person name="Latif H."/>
            <person name="Lerman J.A."/>
            <person name="Portnoy V.A."/>
            <person name="Tarasova Y."/>
            <person name="Nagarajan H."/>
            <person name="Schrimpe-Rutledge A.C."/>
            <person name="Smith R.D."/>
            <person name="Adkins J.N."/>
            <person name="Lee D.H."/>
            <person name="Qiu Y."/>
            <person name="Zengler K."/>
        </authorList>
    </citation>
    <scope>NUCLEOTIDE SEQUENCE [LARGE SCALE GENOMIC DNA]</scope>
    <source>
        <strain>ATCC 43589 / DSM 3109 / JCM 10099 / NBRC 100826 / MSB8</strain>
    </source>
</reference>
<reference key="3">
    <citation type="journal article" date="2005" name="FEBS Lett.">
        <title>Biochemical characterization of the HydE and HydG iron-only hydrogenase maturation enzymes from Thermatoga maritima.</title>
        <authorList>
            <person name="Rubach J.K."/>
            <person name="Brazzolotto X."/>
            <person name="Gaillard J."/>
            <person name="Fontecave M."/>
        </authorList>
    </citation>
    <scope>FUNCTION</scope>
    <scope>SUBUNIT</scope>
    <scope>COFACTOR</scope>
    <scope>MUTAGENESIS OF CYS-63; CYS-67 AND CYS-70</scope>
</reference>
<reference evidence="12 13" key="4">
    <citation type="journal article" date="2008" name="J. Biol. Chem.">
        <title>X-ray structure of the [FeFe]-hydrogenase maturase HydE from Thermotoga maritima.</title>
        <authorList>
            <person name="Nicolet Y."/>
            <person name="Rubach J.K."/>
            <person name="Posewitz M.C."/>
            <person name="Amara P."/>
            <person name="Mathevon C."/>
            <person name="Atta M."/>
            <person name="Fontecave M."/>
            <person name="Fontecilla-Camps J.C."/>
        </authorList>
    </citation>
    <scope>X-RAY CRYSTALLOGRAPHY (1.35 ANGSTROMS) IN COMPLEX WITH IRON-SULFUR (2FE-2S); IRON-SULFUR (4FE-4S-S-ADOMET)</scope>
    <scope>SUBUNIT</scope>
    <scope>COFACTOR</scope>
</reference>
<reference evidence="14 15" key="5">
    <citation type="journal article" date="2009" name="Proc. Natl. Acad. Sci. U.S.A.">
        <title>Unexpected electron transfer mechanism upon AdoMet cleavage in radical SAM proteins.</title>
        <authorList>
            <person name="Nicolet Y."/>
            <person name="Amara P."/>
            <person name="Mouesca J.M."/>
            <person name="Fontecilla-Camps J.C."/>
        </authorList>
    </citation>
    <scope>X-RAY CRYSTALLOGRAPHY (1.25 ANGSTROMS) IN COMPLEX WITH IRON-SULFUR (2FE-2S) AND IRON-SULFUR (4FE-4S-S-ADOMET)</scope>
    <scope>COFACTOR</scope>
</reference>
<reference evidence="16 17 18" key="6">
    <citation type="journal article" date="2013" name="Proc. Natl. Acad. Sci. U.S.A.">
        <title>X-ray snapshots of possible intermediates in the time course of synthesis and degradation of protein-bound Fe4S4 clusters.</title>
        <authorList>
            <person name="Nicolet Y."/>
            <person name="Rohac R."/>
            <person name="Martin L."/>
            <person name="Fontecilla-Camps J.C."/>
        </authorList>
    </citation>
    <scope>X-RAY CRYSTALLOGRAPHY (1.45 ANGSTROMS) IN COMPLEX WITH IRON-SULFUR (2FE-2S) AND IRON-SULFUR (4FE-4S-S-ADOMET)</scope>
    <scope>COFACTOR</scope>
</reference>
<protein>
    <recommendedName>
        <fullName evidence="8">[FeFe] hydrogenase maturase subunit HydE</fullName>
        <ecNumber evidence="8">1.8.-.-</ecNumber>
    </recommendedName>
</protein>
<sequence length="348" mass="39799">MTGREILEKLERREFTREVLKEALSINDRGFNEALFKLADEIRRKYVGDEVHIRAIIEFSNVCRKNCLYCGLRRDNKNLKRYRMTPEEIVERARLAVQFGAKTIVLQSGEDPYYMPDVISDIVKEIKKMGVAVTLSLGEWPREYYEKWKEAGADRYLLRHETANPVLHRKLRPDTSFENRLNCLLTLKELGYETGAGSMVGLPGQTIDDLVDDLLFLKEHDFDMVGIGPFIPHPDTPLANEKKGDFTLTLKMVALTRILLPDSNIPATTAMGTIVPGGREITLRCGANVIMPNWTPSPYRQLYQLYPGKICVFEKDTACIPCVMKMIELLGRKPGRDWGGRKRVFETV</sequence>
<accession>Q9X0Z6</accession>
<accession>G4FE79</accession>
<evidence type="ECO:0000250" key="1">
    <source>
        <dbReference type="UniProtKB" id="Q97IK9"/>
    </source>
</evidence>
<evidence type="ECO:0000255" key="2">
    <source>
        <dbReference type="PIRSR" id="PIRSR004762-1"/>
    </source>
</evidence>
<evidence type="ECO:0000255" key="3">
    <source>
        <dbReference type="PROSITE-ProRule" id="PRU01266"/>
    </source>
</evidence>
<evidence type="ECO:0000269" key="4">
    <source>
    </source>
</evidence>
<evidence type="ECO:0000269" key="5">
    <source>
    </source>
</evidence>
<evidence type="ECO:0000269" key="6">
    <source>
    </source>
</evidence>
<evidence type="ECO:0000269" key="7">
    <source>
    </source>
</evidence>
<evidence type="ECO:0000305" key="8"/>
<evidence type="ECO:0000312" key="9">
    <source>
        <dbReference type="EMBL" id="AAD36344.1"/>
    </source>
</evidence>
<evidence type="ECO:0000312" key="10">
    <source>
        <dbReference type="EMBL" id="AGL50198.1"/>
    </source>
</evidence>
<evidence type="ECO:0000312" key="11">
    <source>
        <dbReference type="EMBL" id="AHD18826.1"/>
    </source>
</evidence>
<evidence type="ECO:0007744" key="12">
    <source>
        <dbReference type="PDB" id="3CIW"/>
    </source>
</evidence>
<evidence type="ECO:0007744" key="13">
    <source>
        <dbReference type="PDB" id="3CIX"/>
    </source>
</evidence>
<evidence type="ECO:0007744" key="14">
    <source>
        <dbReference type="PDB" id="3IIX"/>
    </source>
</evidence>
<evidence type="ECO:0007744" key="15">
    <source>
        <dbReference type="PDB" id="3IIZ"/>
    </source>
</evidence>
<evidence type="ECO:0007744" key="16">
    <source>
        <dbReference type="PDB" id="4JXC"/>
    </source>
</evidence>
<evidence type="ECO:0007744" key="17">
    <source>
        <dbReference type="PDB" id="4JY8"/>
    </source>
</evidence>
<evidence type="ECO:0007744" key="18">
    <source>
        <dbReference type="PDB" id="4JY9"/>
    </source>
</evidence>
<evidence type="ECO:0007744" key="19">
    <source>
        <dbReference type="PDB" id="4JYE"/>
    </source>
</evidence>
<evidence type="ECO:0007829" key="20">
    <source>
        <dbReference type="PDB" id="5FEW"/>
    </source>
</evidence>
<evidence type="ECO:0007829" key="21">
    <source>
        <dbReference type="PDB" id="5FF3"/>
    </source>
</evidence>
<evidence type="ECO:0007829" key="22">
    <source>
        <dbReference type="PDB" id="7O1P"/>
    </source>
</evidence>
<evidence type="ECO:0007829" key="23">
    <source>
        <dbReference type="PDB" id="8QMM"/>
    </source>
</evidence>
<keyword id="KW-0001">2Fe-2S</keyword>
<keyword id="KW-0002">3D-structure</keyword>
<keyword id="KW-0004">4Fe-4S</keyword>
<keyword id="KW-0408">Iron</keyword>
<keyword id="KW-0411">Iron-sulfur</keyword>
<keyword id="KW-0479">Metal-binding</keyword>
<keyword id="KW-0560">Oxidoreductase</keyword>
<keyword id="KW-1185">Reference proteome</keyword>
<keyword id="KW-0949">S-adenosyl-L-methionine</keyword>